<name>SIA7D_HUMAN</name>
<dbReference type="EC" id="2.4.3.7" evidence="2"/>
<dbReference type="EMBL" id="AJ271734">
    <property type="protein sequence ID" value="CAC07404.1"/>
    <property type="molecule type" value="mRNA"/>
</dbReference>
<dbReference type="EMBL" id="AF127142">
    <property type="protein sequence ID" value="AAF00102.1"/>
    <property type="molecule type" value="mRNA"/>
</dbReference>
<dbReference type="EMBL" id="AB035172">
    <property type="protein sequence ID" value="BAA87034.1"/>
    <property type="molecule type" value="mRNA"/>
</dbReference>
<dbReference type="EMBL" id="AK000600">
    <property type="protein sequence ID" value="BAA91281.1"/>
    <property type="molecule type" value="mRNA"/>
</dbReference>
<dbReference type="EMBL" id="AL157935">
    <property type="status" value="NOT_ANNOTATED_CDS"/>
    <property type="molecule type" value="Genomic_DNA"/>
</dbReference>
<dbReference type="EMBL" id="CH471090">
    <property type="protein sequence ID" value="EAW87717.1"/>
    <property type="molecule type" value="Genomic_DNA"/>
</dbReference>
<dbReference type="EMBL" id="BC036705">
    <property type="protein sequence ID" value="AAH36705.1"/>
    <property type="molecule type" value="mRNA"/>
</dbReference>
<dbReference type="EMBL" id="Y17460">
    <property type="protein sequence ID" value="CAB44353.1"/>
    <property type="molecule type" value="Genomic_DNA"/>
</dbReference>
<dbReference type="EMBL" id="Y17461">
    <property type="protein sequence ID" value="CAB44354.1"/>
    <property type="molecule type" value="Genomic_DNA"/>
</dbReference>
<dbReference type="CCDS" id="CCDS6883.1"/>
<dbReference type="RefSeq" id="NP_778204.1">
    <property type="nucleotide sequence ID" value="NM_175039.4"/>
</dbReference>
<dbReference type="RefSeq" id="NP_778205.1">
    <property type="nucleotide sequence ID" value="NM_175040.3"/>
</dbReference>
<dbReference type="SMR" id="Q9H4F1"/>
<dbReference type="BioGRID" id="117992">
    <property type="interactions" value="53"/>
</dbReference>
<dbReference type="FunCoup" id="Q9H4F1">
    <property type="interactions" value="183"/>
</dbReference>
<dbReference type="IntAct" id="Q9H4F1">
    <property type="interactions" value="18"/>
</dbReference>
<dbReference type="STRING" id="9606.ENSP00000336733"/>
<dbReference type="CAZy" id="GT29">
    <property type="family name" value="Glycosyltransferase Family 29"/>
</dbReference>
<dbReference type="GlyCosmos" id="Q9H4F1">
    <property type="glycosylation" value="1 site, No reported glycans"/>
</dbReference>
<dbReference type="GlyGen" id="Q9H4F1">
    <property type="glycosylation" value="3 sites, 1 N-linked glycan (1 site), 2 O-linked glycans (2 sites)"/>
</dbReference>
<dbReference type="iPTMnet" id="Q9H4F1"/>
<dbReference type="PhosphoSitePlus" id="Q9H4F1"/>
<dbReference type="BioMuta" id="ST6GALNAC4"/>
<dbReference type="DMDM" id="21759443"/>
<dbReference type="jPOST" id="Q9H4F1"/>
<dbReference type="MassIVE" id="Q9H4F1"/>
<dbReference type="PaxDb" id="9606-ENSP00000336733"/>
<dbReference type="PeptideAtlas" id="Q9H4F1"/>
<dbReference type="ProteomicsDB" id="80828"/>
<dbReference type="Pumba" id="Q9H4F1"/>
<dbReference type="Antibodypedia" id="2464">
    <property type="antibodies" value="90 antibodies from 19 providers"/>
</dbReference>
<dbReference type="DNASU" id="27090"/>
<dbReference type="Ensembl" id="ENST00000335791.10">
    <property type="protein sequence ID" value="ENSP00000336733.5"/>
    <property type="gene ID" value="ENSG00000136840.19"/>
</dbReference>
<dbReference type="GeneID" id="27090"/>
<dbReference type="KEGG" id="hsa:27090"/>
<dbReference type="MANE-Select" id="ENST00000335791.10">
    <property type="protein sequence ID" value="ENSP00000336733.5"/>
    <property type="RefSeq nucleotide sequence ID" value="NM_175039.4"/>
    <property type="RefSeq protein sequence ID" value="NP_778204.1"/>
</dbReference>
<dbReference type="UCSC" id="uc004bss.3">
    <property type="organism name" value="human"/>
</dbReference>
<dbReference type="AGR" id="HGNC:17846"/>
<dbReference type="CTD" id="27090"/>
<dbReference type="DisGeNET" id="27090"/>
<dbReference type="GeneCards" id="ST6GALNAC4"/>
<dbReference type="HGNC" id="HGNC:17846">
    <property type="gene designation" value="ST6GALNAC4"/>
</dbReference>
<dbReference type="HPA" id="ENSG00000136840">
    <property type="expression patterns" value="Low tissue specificity"/>
</dbReference>
<dbReference type="MIM" id="606378">
    <property type="type" value="gene"/>
</dbReference>
<dbReference type="neXtProt" id="NX_Q9H4F1"/>
<dbReference type="OpenTargets" id="ENSG00000136840"/>
<dbReference type="PharmGKB" id="PA38250"/>
<dbReference type="VEuPathDB" id="HostDB:ENSG00000136840"/>
<dbReference type="eggNOG" id="KOG2692">
    <property type="taxonomic scope" value="Eukaryota"/>
</dbReference>
<dbReference type="GeneTree" id="ENSGT00940000157958"/>
<dbReference type="HOGENOM" id="CLU_061099_1_0_1"/>
<dbReference type="InParanoid" id="Q9H4F1"/>
<dbReference type="OMA" id="NECRMYK"/>
<dbReference type="OrthoDB" id="10264956at2759"/>
<dbReference type="PAN-GO" id="Q9H4F1">
    <property type="GO annotations" value="3 GO annotations based on evolutionary models"/>
</dbReference>
<dbReference type="PhylomeDB" id="Q9H4F1"/>
<dbReference type="TreeFam" id="TF352818"/>
<dbReference type="BioCyc" id="MetaCyc:HS06223-MONOMER"/>
<dbReference type="BRENDA" id="2.4.99.7">
    <property type="organism ID" value="2681"/>
</dbReference>
<dbReference type="PathwayCommons" id="Q9H4F1"/>
<dbReference type="Reactome" id="R-HSA-4085001">
    <property type="pathway name" value="Sialic acid metabolism"/>
</dbReference>
<dbReference type="Reactome" id="R-HSA-9683673">
    <property type="pathway name" value="Maturation of protein 3a"/>
</dbReference>
<dbReference type="Reactome" id="R-HSA-9694548">
    <property type="pathway name" value="Maturation of spike protein"/>
</dbReference>
<dbReference type="Reactome" id="R-HSA-9694719">
    <property type="pathway name" value="Maturation of protein 3a"/>
</dbReference>
<dbReference type="Reactome" id="R-HSA-977068">
    <property type="pathway name" value="Termination of O-glycan biosynthesis"/>
</dbReference>
<dbReference type="SignaLink" id="Q9H4F1"/>
<dbReference type="UniPathway" id="UPA00378"/>
<dbReference type="BioGRID-ORCS" id="27090">
    <property type="hits" value="20 hits in 1153 CRISPR screens"/>
</dbReference>
<dbReference type="GeneWiki" id="ST6GALNAC4"/>
<dbReference type="GenomeRNAi" id="27090"/>
<dbReference type="Pharos" id="Q9H4F1">
    <property type="development level" value="Tbio"/>
</dbReference>
<dbReference type="PRO" id="PR:Q9H4F1"/>
<dbReference type="Proteomes" id="UP000005640">
    <property type="component" value="Chromosome 9"/>
</dbReference>
<dbReference type="RNAct" id="Q9H4F1">
    <property type="molecule type" value="protein"/>
</dbReference>
<dbReference type="Bgee" id="ENSG00000136840">
    <property type="expression patterns" value="Expressed in body of pancreas and 158 other cell types or tissues"/>
</dbReference>
<dbReference type="ExpressionAtlas" id="Q9H4F1">
    <property type="expression patterns" value="baseline and differential"/>
</dbReference>
<dbReference type="GO" id="GO:0000139">
    <property type="term" value="C:Golgi membrane"/>
    <property type="evidence" value="ECO:0000304"/>
    <property type="project" value="Reactome"/>
</dbReference>
<dbReference type="GO" id="GO:0001665">
    <property type="term" value="F:alpha-N-acetylgalactosaminide alpha-2,6-sialyltransferase activity"/>
    <property type="evidence" value="ECO:0000318"/>
    <property type="project" value="GO_Central"/>
</dbReference>
<dbReference type="GO" id="GO:0047290">
    <property type="term" value="F:alpha-N-acetylneuraminyl-2,3-beta-galactosyl-1,3-N-acetyl-galactosaminide 6-alpha-sialyltransferase activity"/>
    <property type="evidence" value="ECO:0000304"/>
    <property type="project" value="Reactome"/>
</dbReference>
<dbReference type="GO" id="GO:0008373">
    <property type="term" value="F:sialyltransferase activity"/>
    <property type="evidence" value="ECO:0000304"/>
    <property type="project" value="Reactome"/>
</dbReference>
<dbReference type="GO" id="GO:0001574">
    <property type="term" value="P:ganglioside biosynthetic process"/>
    <property type="evidence" value="ECO:0000318"/>
    <property type="project" value="GO_Central"/>
</dbReference>
<dbReference type="GO" id="GO:0006664">
    <property type="term" value="P:glycolipid metabolic process"/>
    <property type="evidence" value="ECO:0000304"/>
    <property type="project" value="ProtInc"/>
</dbReference>
<dbReference type="GO" id="GO:0016266">
    <property type="term" value="P:O-glycan processing"/>
    <property type="evidence" value="ECO:0000304"/>
    <property type="project" value="Reactome"/>
</dbReference>
<dbReference type="GO" id="GO:0009311">
    <property type="term" value="P:oligosaccharide metabolic process"/>
    <property type="evidence" value="ECO:0000318"/>
    <property type="project" value="GO_Central"/>
</dbReference>
<dbReference type="GO" id="GO:0019082">
    <property type="term" value="P:viral protein processing"/>
    <property type="evidence" value="ECO:0000304"/>
    <property type="project" value="Reactome"/>
</dbReference>
<dbReference type="CDD" id="cd23977">
    <property type="entry name" value="GT29_ST6GALNAC4"/>
    <property type="match status" value="1"/>
</dbReference>
<dbReference type="FunFam" id="3.90.1480.20:FF:000008">
    <property type="entry name" value="ST6 N-acetylgalactosaminide alpha-2,6-sialyltransferase 3"/>
    <property type="match status" value="1"/>
</dbReference>
<dbReference type="Gene3D" id="3.90.1480.20">
    <property type="entry name" value="Glycosyl transferase family 29"/>
    <property type="match status" value="1"/>
</dbReference>
<dbReference type="InterPro" id="IPR001675">
    <property type="entry name" value="Glyco_trans_29"/>
</dbReference>
<dbReference type="InterPro" id="IPR038578">
    <property type="entry name" value="GT29-like_sf"/>
</dbReference>
<dbReference type="PANTHER" id="PTHR45906">
    <property type="entry name" value="ALPHA-N-ACETYL-NEURAMINYL-2,3-BETA-GALACTOSYL-1, 3-N-ACETYL-GALACTOSAMINIDE ALPHA-2,6-SIALYLTRANSFERASE-LIKE"/>
    <property type="match status" value="1"/>
</dbReference>
<dbReference type="PANTHER" id="PTHR45906:SF4">
    <property type="entry name" value="ALPHA-N-ACETYL-NEURAMINYL-2,3-BETA-GALACTOSYL-1,3-N-ACETYL-GALACTOSAMINIDE ALPHA-2,6-SIALYLTRANSFERASE"/>
    <property type="match status" value="1"/>
</dbReference>
<dbReference type="Pfam" id="PF00777">
    <property type="entry name" value="Glyco_transf_29"/>
    <property type="match status" value="1"/>
</dbReference>
<evidence type="ECO:0000250" key="1"/>
<evidence type="ECO:0000250" key="2">
    <source>
        <dbReference type="UniProtKB" id="Q9R2B6"/>
    </source>
</evidence>
<evidence type="ECO:0000255" key="3"/>
<evidence type="ECO:0000305" key="4"/>
<accession>Q9H4F1</accession>
<accession>Q5T9D0</accession>
<accession>Q9NWU6</accession>
<accession>Q9UKU1</accession>
<accession>Q9ULB9</accession>
<accession>Q9Y3G3</accession>
<accession>Q9Y3G4</accession>
<comment type="function">
    <text evidence="2">Transfers the sialyl group (N-acetyl-alpha-neuraminyl or NeuAc) from CMP-NeuAc to the GalNAc residue on the NeuAc-alpha-2,3-Gal-beta-1,3-GalNAc sequence of glycoproteins and glycolipids forming an alpha-2,6-linkage. Produces branched type disialyl structures by transfer of a sialyl group onto a GalNAc residue inside the backbone core chains. Prefers O-glycans to glycoproteins or glycolipids.</text>
</comment>
<comment type="catalytic activity">
    <reaction evidence="2">
        <text>an alpha-Neu5Ac-(2-&gt;3)-beta-D-Gal-(1-&gt;3)-D-GlcNAc derivative + CMP-N-acetyl-beta-neuraminate = an alpha-Neu5Ac-(2-&gt;3)-beta-D-Gal-(1-&gt;3)-[alpha-Neu5Ac-(2-&gt;6)]-D-GlcNAc derivative + CMP + H(+)</text>
        <dbReference type="Rhea" id="RHEA:53896"/>
        <dbReference type="ChEBI" id="CHEBI:15378"/>
        <dbReference type="ChEBI" id="CHEBI:57812"/>
        <dbReference type="ChEBI" id="CHEBI:60377"/>
        <dbReference type="ChEBI" id="CHEBI:146021"/>
        <dbReference type="ChEBI" id="CHEBI:149714"/>
        <dbReference type="EC" id="2.4.3.7"/>
    </reaction>
</comment>
<comment type="catalytic activity">
    <reaction evidence="2">
        <text>N-acetyl-alpha-neuraminosyl-(2-&gt;3)-beta-D-galactosyl-(1-&gt;3)-N-acetyl-D-galactosamine + CMP-N-acetyl-beta-neuraminate = N-acetyl-alpha-neuraminosyl-(2-&gt;3)-beta-D-galactosyl-(1-&gt;3)-[N-acetyl-alpha-neuraminosyl-(2-&gt;6)]-N-acetyl-D-galactosamine + CMP + H(+)</text>
        <dbReference type="Rhea" id="RHEA:65288"/>
        <dbReference type="ChEBI" id="CHEBI:15378"/>
        <dbReference type="ChEBI" id="CHEBI:57812"/>
        <dbReference type="ChEBI" id="CHEBI:60377"/>
        <dbReference type="ChEBI" id="CHEBI:156406"/>
        <dbReference type="ChEBI" id="CHEBI:156407"/>
    </reaction>
    <physiologicalReaction direction="left-to-right" evidence="2">
        <dbReference type="Rhea" id="RHEA:65289"/>
    </physiologicalReaction>
</comment>
<comment type="catalytic activity">
    <reaction evidence="2">
        <text>a ganglioside GM1b (d18:1(4E)) + CMP-N-acetyl-beta-neuraminate = a ganglioside GD1alpha (d18:1(4E)) + CMP + H(+)</text>
        <dbReference type="Rhea" id="RHEA:41968"/>
        <dbReference type="ChEBI" id="CHEBI:15378"/>
        <dbReference type="ChEBI" id="CHEBI:57812"/>
        <dbReference type="ChEBI" id="CHEBI:60377"/>
        <dbReference type="ChEBI" id="CHEBI:78568"/>
        <dbReference type="ChEBI" id="CHEBI:78569"/>
    </reaction>
    <physiologicalReaction direction="left-to-right" evidence="2">
        <dbReference type="Rhea" id="RHEA:41969"/>
    </physiologicalReaction>
</comment>
<comment type="catalytic activity">
    <reaction evidence="2">
        <text>3-O-[alpha-Neu5Ac-(2-&gt;3)-beta-D-Gal-(1-&gt;3)-alpha-D-GalNAc]-L-Ser-[protein] + CMP-N-acetyl-beta-neuraminate = a 3-O-{alpha-Neu5Ac-(2-&gt;3)-beta-D-Gal-(1-&gt;3)-[alpha-Neu5Ac-(2-&gt;6)]-alpha-D-GalNAc}-L-seryl-[protein] + CMP + H(+)</text>
        <dbReference type="Rhea" id="RHEA:65280"/>
        <dbReference type="Rhea" id="RHEA-COMP:16760"/>
        <dbReference type="Rhea" id="RHEA-COMP:16761"/>
        <dbReference type="ChEBI" id="CHEBI:15378"/>
        <dbReference type="ChEBI" id="CHEBI:57812"/>
        <dbReference type="ChEBI" id="CHEBI:60377"/>
        <dbReference type="ChEBI" id="CHEBI:156395"/>
        <dbReference type="ChEBI" id="CHEBI:156397"/>
    </reaction>
    <physiologicalReaction direction="left-to-right" evidence="2">
        <dbReference type="Rhea" id="RHEA:65281"/>
    </physiologicalReaction>
</comment>
<comment type="catalytic activity">
    <reaction evidence="2">
        <text>3-O-[alpha-Neu5Ac-(2-&gt;3)-beta-D-Gal-(1-&gt;3)-alpha-D-GalNAc]-L-Thr-[protein] + CMP-N-acetyl-beta-neuraminate = a 3-O-{alpha-Neu5Ac-(2-&gt;3)-beta-D-Gal-(1-&gt;3)-[alpha-Neu5Ac-(2-&gt;6)]-alpha-D-GalNAc}-L-threonyl-[protein] + CMP + H(+)</text>
        <dbReference type="Rhea" id="RHEA:65284"/>
        <dbReference type="Rhea" id="RHEA-COMP:16762"/>
        <dbReference type="Rhea" id="RHEA-COMP:16763"/>
        <dbReference type="ChEBI" id="CHEBI:15378"/>
        <dbReference type="ChEBI" id="CHEBI:57812"/>
        <dbReference type="ChEBI" id="CHEBI:60377"/>
        <dbReference type="ChEBI" id="CHEBI:156396"/>
        <dbReference type="ChEBI" id="CHEBI:156398"/>
    </reaction>
    <physiologicalReaction direction="left-to-right" evidence="2">
        <dbReference type="Rhea" id="RHEA:65285"/>
    </physiologicalReaction>
</comment>
<comment type="pathway">
    <text evidence="2">Protein modification; protein glycosylation.</text>
</comment>
<comment type="pathway">
    <text evidence="2">Glycolipid biosynthesis.</text>
</comment>
<comment type="subcellular location">
    <subcellularLocation>
        <location evidence="1">Golgi apparatus membrane</location>
        <topology evidence="1">Single-pass type II membrane protein</topology>
    </subcellularLocation>
</comment>
<comment type="tissue specificity">
    <text>Ubiquitous.</text>
</comment>
<comment type="similarity">
    <text evidence="4">Belongs to the glycosyltransferase 29 family.</text>
</comment>
<comment type="online information" name="Functional Glycomics Gateway - GTase">
    <link uri="http://www.functionalglycomics.org/glycomics/molecule/jsp/glycoEnzyme/viewGlycoEnzyme.jsp?gbpId=gt_hum_633"/>
    <text>ST6GalNAc IV</text>
</comment>
<gene>
    <name type="primary">ST6GALNAC4</name>
    <name type="synonym">SIAT3C</name>
    <name type="synonym">SIAT7D</name>
</gene>
<keyword id="KW-1015">Disulfide bond</keyword>
<keyword id="KW-0325">Glycoprotein</keyword>
<keyword id="KW-0328">Glycosyltransferase</keyword>
<keyword id="KW-0333">Golgi apparatus</keyword>
<keyword id="KW-0443">Lipid metabolism</keyword>
<keyword id="KW-0472">Membrane</keyword>
<keyword id="KW-1267">Proteomics identification</keyword>
<keyword id="KW-1185">Reference proteome</keyword>
<keyword id="KW-0730">Sialic acid</keyword>
<keyword id="KW-0735">Signal-anchor</keyword>
<keyword id="KW-0808">Transferase</keyword>
<keyword id="KW-0812">Transmembrane</keyword>
<keyword id="KW-1133">Transmembrane helix</keyword>
<protein>
    <recommendedName>
        <fullName>Alpha-N-acetyl-neuraminyl-2,3-beta-galactosyl-1,3-N-acetyl-galactosaminide alpha-2,6-sialyltransferase</fullName>
        <ecNumber evidence="2">2.4.3.7</ecNumber>
    </recommendedName>
    <alternativeName>
        <fullName>NeuAc-alpha-2,3-Gal-beta-1,3-GalNAc-alpha-2,6-sialyltransferase</fullName>
    </alternativeName>
    <alternativeName>
        <fullName>ST6GalNAc IV</fullName>
        <shortName>ST6GalNAcIV</shortName>
    </alternativeName>
    <alternativeName>
        <fullName>Sialyltransferase 3C</fullName>
        <shortName>SIAT3-C</shortName>
    </alternativeName>
    <alternativeName>
        <fullName>Sialyltransferase 7D</fullName>
        <shortName>SIAT7-D</shortName>
    </alternativeName>
</protein>
<feature type="chain" id="PRO_0000149278" description="Alpha-N-acetyl-neuraminyl-2,3-beta-galactosyl-1,3-N-acetyl-galactosaminide alpha-2,6-sialyltransferase">
    <location>
        <begin position="1"/>
        <end position="302"/>
    </location>
</feature>
<feature type="topological domain" description="Cytoplasmic" evidence="3">
    <location>
        <begin position="1"/>
        <end position="6"/>
    </location>
</feature>
<feature type="transmembrane region" description="Helical; Signal-anchor for type II membrane protein" evidence="3">
    <location>
        <begin position="7"/>
        <end position="27"/>
    </location>
</feature>
<feature type="topological domain" description="Lumenal" evidence="3">
    <location>
        <begin position="28"/>
        <end position="302"/>
    </location>
</feature>
<feature type="glycosylation site" description="N-linked (GlcNAc...) asparagine" evidence="3">
    <location>
        <position position="135"/>
    </location>
</feature>
<feature type="disulfide bond" evidence="1">
    <location>
        <begin position="76"/>
        <end position="225"/>
    </location>
</feature>
<feature type="sequence conflict" description="In Ref. 2; AAF00102." evidence="4" ref="2">
    <original>ST</original>
    <variation>QA</variation>
    <location>
        <begin position="119"/>
        <end position="120"/>
    </location>
</feature>
<feature type="sequence conflict" description="In Ref. 1; CAC07404." evidence="4" ref="1">
    <original>S</original>
    <variation>T</variation>
    <location>
        <position position="119"/>
    </location>
</feature>
<feature type="sequence conflict" description="In Ref. 4; BAA91281." evidence="4" ref="4">
    <original>F</original>
    <variation>L</variation>
    <location>
        <position position="140"/>
    </location>
</feature>
<proteinExistence type="evidence at protein level"/>
<reference key="1">
    <citation type="journal article" date="2000" name="Biochem. J.">
        <title>Cloning, expression and gene organization of a human Neu5Ac alpha 2-3Gal beta 1-3GalNAc alpha 2,6-sialyltransferase: hST6GalNAcIV.</title>
        <authorList>
            <person name="Harduin-Lepers A."/>
            <person name="Stokes D.C."/>
            <person name="Steelant W.F.A."/>
            <person name="Samyn-Petit B."/>
            <person name="Krzewinski-Recchi M.A."/>
            <person name="Vallejo-Ruiz V."/>
            <person name="Zanetta J.P."/>
            <person name="Auge C."/>
            <person name="Delannoy P."/>
        </authorList>
    </citation>
    <scope>NUCLEOTIDE SEQUENCE [GENOMIC DNA / MRNA]</scope>
</reference>
<reference key="2">
    <citation type="submission" date="1999-02" db="EMBL/GenBank/DDBJ databases">
        <title>Molecular cloning of NeuAcalpha2,3Galbeta1,3GalNAc alpha2,6-sialyltransferase cDNA from human fetal liver.</title>
        <authorList>
            <person name="Kim K.-W."/>
            <person name="Kim K.-S."/>
            <person name="Do S.-I."/>
            <person name="Kim C.-H."/>
            <person name="Lee Y.-C."/>
        </authorList>
    </citation>
    <scope>NUCLEOTIDE SEQUENCE [MRNA]</scope>
    <source>
        <tissue>Fetal liver</tissue>
    </source>
</reference>
<reference key="3">
    <citation type="submission" date="1999-11" db="EMBL/GenBank/DDBJ databases">
        <title>N-acetylgalactosaminide alpha2,6-sialyltransferase.</title>
        <authorList>
            <person name="Yoshida A."/>
        </authorList>
    </citation>
    <scope>NUCLEOTIDE SEQUENCE [MRNA]</scope>
    <source>
        <tissue>Lung</tissue>
    </source>
</reference>
<reference key="4">
    <citation type="journal article" date="2004" name="Nat. Genet.">
        <title>Complete sequencing and characterization of 21,243 full-length human cDNAs.</title>
        <authorList>
            <person name="Ota T."/>
            <person name="Suzuki Y."/>
            <person name="Nishikawa T."/>
            <person name="Otsuki T."/>
            <person name="Sugiyama T."/>
            <person name="Irie R."/>
            <person name="Wakamatsu A."/>
            <person name="Hayashi K."/>
            <person name="Sato H."/>
            <person name="Nagai K."/>
            <person name="Kimura K."/>
            <person name="Makita H."/>
            <person name="Sekine M."/>
            <person name="Obayashi M."/>
            <person name="Nishi T."/>
            <person name="Shibahara T."/>
            <person name="Tanaka T."/>
            <person name="Ishii S."/>
            <person name="Yamamoto J."/>
            <person name="Saito K."/>
            <person name="Kawai Y."/>
            <person name="Isono Y."/>
            <person name="Nakamura Y."/>
            <person name="Nagahari K."/>
            <person name="Murakami K."/>
            <person name="Yasuda T."/>
            <person name="Iwayanagi T."/>
            <person name="Wagatsuma M."/>
            <person name="Shiratori A."/>
            <person name="Sudo H."/>
            <person name="Hosoiri T."/>
            <person name="Kaku Y."/>
            <person name="Kodaira H."/>
            <person name="Kondo H."/>
            <person name="Sugawara M."/>
            <person name="Takahashi M."/>
            <person name="Kanda K."/>
            <person name="Yokoi T."/>
            <person name="Furuya T."/>
            <person name="Kikkawa E."/>
            <person name="Omura Y."/>
            <person name="Abe K."/>
            <person name="Kamihara K."/>
            <person name="Katsuta N."/>
            <person name="Sato K."/>
            <person name="Tanikawa M."/>
            <person name="Yamazaki M."/>
            <person name="Ninomiya K."/>
            <person name="Ishibashi T."/>
            <person name="Yamashita H."/>
            <person name="Murakawa K."/>
            <person name="Fujimori K."/>
            <person name="Tanai H."/>
            <person name="Kimata M."/>
            <person name="Watanabe M."/>
            <person name="Hiraoka S."/>
            <person name="Chiba Y."/>
            <person name="Ishida S."/>
            <person name="Ono Y."/>
            <person name="Takiguchi S."/>
            <person name="Watanabe S."/>
            <person name="Yosida M."/>
            <person name="Hotuta T."/>
            <person name="Kusano J."/>
            <person name="Kanehori K."/>
            <person name="Takahashi-Fujii A."/>
            <person name="Hara H."/>
            <person name="Tanase T.-O."/>
            <person name="Nomura Y."/>
            <person name="Togiya S."/>
            <person name="Komai F."/>
            <person name="Hara R."/>
            <person name="Takeuchi K."/>
            <person name="Arita M."/>
            <person name="Imose N."/>
            <person name="Musashino K."/>
            <person name="Yuuki H."/>
            <person name="Oshima A."/>
            <person name="Sasaki N."/>
            <person name="Aotsuka S."/>
            <person name="Yoshikawa Y."/>
            <person name="Matsunawa H."/>
            <person name="Ichihara T."/>
            <person name="Shiohata N."/>
            <person name="Sano S."/>
            <person name="Moriya S."/>
            <person name="Momiyama H."/>
            <person name="Satoh N."/>
            <person name="Takami S."/>
            <person name="Terashima Y."/>
            <person name="Suzuki O."/>
            <person name="Nakagawa S."/>
            <person name="Senoh A."/>
            <person name="Mizoguchi H."/>
            <person name="Goto Y."/>
            <person name="Shimizu F."/>
            <person name="Wakebe H."/>
            <person name="Hishigaki H."/>
            <person name="Watanabe T."/>
            <person name="Sugiyama A."/>
            <person name="Takemoto M."/>
            <person name="Kawakami B."/>
            <person name="Yamazaki M."/>
            <person name="Watanabe K."/>
            <person name="Kumagai A."/>
            <person name="Itakura S."/>
            <person name="Fukuzumi Y."/>
            <person name="Fujimori Y."/>
            <person name="Komiyama M."/>
            <person name="Tashiro H."/>
            <person name="Tanigami A."/>
            <person name="Fujiwara T."/>
            <person name="Ono T."/>
            <person name="Yamada K."/>
            <person name="Fujii Y."/>
            <person name="Ozaki K."/>
            <person name="Hirao M."/>
            <person name="Ohmori Y."/>
            <person name="Kawabata A."/>
            <person name="Hikiji T."/>
            <person name="Kobatake N."/>
            <person name="Inagaki H."/>
            <person name="Ikema Y."/>
            <person name="Okamoto S."/>
            <person name="Okitani R."/>
            <person name="Kawakami T."/>
            <person name="Noguchi S."/>
            <person name="Itoh T."/>
            <person name="Shigeta K."/>
            <person name="Senba T."/>
            <person name="Matsumura K."/>
            <person name="Nakajima Y."/>
            <person name="Mizuno T."/>
            <person name="Morinaga M."/>
            <person name="Sasaki M."/>
            <person name="Togashi T."/>
            <person name="Oyama M."/>
            <person name="Hata H."/>
            <person name="Watanabe M."/>
            <person name="Komatsu T."/>
            <person name="Mizushima-Sugano J."/>
            <person name="Satoh T."/>
            <person name="Shirai Y."/>
            <person name="Takahashi Y."/>
            <person name="Nakagawa K."/>
            <person name="Okumura K."/>
            <person name="Nagase T."/>
            <person name="Nomura N."/>
            <person name="Kikuchi H."/>
            <person name="Masuho Y."/>
            <person name="Yamashita R."/>
            <person name="Nakai K."/>
            <person name="Yada T."/>
            <person name="Nakamura Y."/>
            <person name="Ohara O."/>
            <person name="Isogai T."/>
            <person name="Sugano S."/>
        </authorList>
    </citation>
    <scope>NUCLEOTIDE SEQUENCE [LARGE SCALE MRNA]</scope>
</reference>
<reference key="5">
    <citation type="journal article" date="2004" name="Nature">
        <title>DNA sequence and analysis of human chromosome 9.</title>
        <authorList>
            <person name="Humphray S.J."/>
            <person name="Oliver K."/>
            <person name="Hunt A.R."/>
            <person name="Plumb R.W."/>
            <person name="Loveland J.E."/>
            <person name="Howe K.L."/>
            <person name="Andrews T.D."/>
            <person name="Searle S."/>
            <person name="Hunt S.E."/>
            <person name="Scott C.E."/>
            <person name="Jones M.C."/>
            <person name="Ainscough R."/>
            <person name="Almeida J.P."/>
            <person name="Ambrose K.D."/>
            <person name="Ashwell R.I.S."/>
            <person name="Babbage A.K."/>
            <person name="Babbage S."/>
            <person name="Bagguley C.L."/>
            <person name="Bailey J."/>
            <person name="Banerjee R."/>
            <person name="Barker D.J."/>
            <person name="Barlow K.F."/>
            <person name="Bates K."/>
            <person name="Beasley H."/>
            <person name="Beasley O."/>
            <person name="Bird C.P."/>
            <person name="Bray-Allen S."/>
            <person name="Brown A.J."/>
            <person name="Brown J.Y."/>
            <person name="Burford D."/>
            <person name="Burrill W."/>
            <person name="Burton J."/>
            <person name="Carder C."/>
            <person name="Carter N.P."/>
            <person name="Chapman J.C."/>
            <person name="Chen Y."/>
            <person name="Clarke G."/>
            <person name="Clark S.Y."/>
            <person name="Clee C.M."/>
            <person name="Clegg S."/>
            <person name="Collier R.E."/>
            <person name="Corby N."/>
            <person name="Crosier M."/>
            <person name="Cummings A.T."/>
            <person name="Davies J."/>
            <person name="Dhami P."/>
            <person name="Dunn M."/>
            <person name="Dutta I."/>
            <person name="Dyer L.W."/>
            <person name="Earthrowl M.E."/>
            <person name="Faulkner L."/>
            <person name="Fleming C.J."/>
            <person name="Frankish A."/>
            <person name="Frankland J.A."/>
            <person name="French L."/>
            <person name="Fricker D.G."/>
            <person name="Garner P."/>
            <person name="Garnett J."/>
            <person name="Ghori J."/>
            <person name="Gilbert J.G.R."/>
            <person name="Glison C."/>
            <person name="Grafham D.V."/>
            <person name="Gribble S."/>
            <person name="Griffiths C."/>
            <person name="Griffiths-Jones S."/>
            <person name="Grocock R."/>
            <person name="Guy J."/>
            <person name="Hall R.E."/>
            <person name="Hammond S."/>
            <person name="Harley J.L."/>
            <person name="Harrison E.S.I."/>
            <person name="Hart E.A."/>
            <person name="Heath P.D."/>
            <person name="Henderson C.D."/>
            <person name="Hopkins B.L."/>
            <person name="Howard P.J."/>
            <person name="Howden P.J."/>
            <person name="Huckle E."/>
            <person name="Johnson C."/>
            <person name="Johnson D."/>
            <person name="Joy A.A."/>
            <person name="Kay M."/>
            <person name="Keenan S."/>
            <person name="Kershaw J.K."/>
            <person name="Kimberley A.M."/>
            <person name="King A."/>
            <person name="Knights A."/>
            <person name="Laird G.K."/>
            <person name="Langford C."/>
            <person name="Lawlor S."/>
            <person name="Leongamornlert D.A."/>
            <person name="Leversha M."/>
            <person name="Lloyd C."/>
            <person name="Lloyd D.M."/>
            <person name="Lovell J."/>
            <person name="Martin S."/>
            <person name="Mashreghi-Mohammadi M."/>
            <person name="Matthews L."/>
            <person name="McLaren S."/>
            <person name="McLay K.E."/>
            <person name="McMurray A."/>
            <person name="Milne S."/>
            <person name="Nickerson T."/>
            <person name="Nisbett J."/>
            <person name="Nordsiek G."/>
            <person name="Pearce A.V."/>
            <person name="Peck A.I."/>
            <person name="Porter K.M."/>
            <person name="Pandian R."/>
            <person name="Pelan S."/>
            <person name="Phillimore B."/>
            <person name="Povey S."/>
            <person name="Ramsey Y."/>
            <person name="Rand V."/>
            <person name="Scharfe M."/>
            <person name="Sehra H.K."/>
            <person name="Shownkeen R."/>
            <person name="Sims S.K."/>
            <person name="Skuce C.D."/>
            <person name="Smith M."/>
            <person name="Steward C.A."/>
            <person name="Swarbreck D."/>
            <person name="Sycamore N."/>
            <person name="Tester J."/>
            <person name="Thorpe A."/>
            <person name="Tracey A."/>
            <person name="Tromans A."/>
            <person name="Thomas D.W."/>
            <person name="Wall M."/>
            <person name="Wallis J.M."/>
            <person name="West A.P."/>
            <person name="Whitehead S.L."/>
            <person name="Willey D.L."/>
            <person name="Williams S.A."/>
            <person name="Wilming L."/>
            <person name="Wray P.W."/>
            <person name="Young L."/>
            <person name="Ashurst J.L."/>
            <person name="Coulson A."/>
            <person name="Blocker H."/>
            <person name="Durbin R.M."/>
            <person name="Sulston J.E."/>
            <person name="Hubbard T."/>
            <person name="Jackson M.J."/>
            <person name="Bentley D.R."/>
            <person name="Beck S."/>
            <person name="Rogers J."/>
            <person name="Dunham I."/>
        </authorList>
    </citation>
    <scope>NUCLEOTIDE SEQUENCE [LARGE SCALE GENOMIC DNA]</scope>
</reference>
<reference key="6">
    <citation type="submission" date="2005-07" db="EMBL/GenBank/DDBJ databases">
        <authorList>
            <person name="Mural R.J."/>
            <person name="Istrail S."/>
            <person name="Sutton G.G."/>
            <person name="Florea L."/>
            <person name="Halpern A.L."/>
            <person name="Mobarry C.M."/>
            <person name="Lippert R."/>
            <person name="Walenz B."/>
            <person name="Shatkay H."/>
            <person name="Dew I."/>
            <person name="Miller J.R."/>
            <person name="Flanigan M.J."/>
            <person name="Edwards N.J."/>
            <person name="Bolanos R."/>
            <person name="Fasulo D."/>
            <person name="Halldorsson B.V."/>
            <person name="Hannenhalli S."/>
            <person name="Turner R."/>
            <person name="Yooseph S."/>
            <person name="Lu F."/>
            <person name="Nusskern D.R."/>
            <person name="Shue B.C."/>
            <person name="Zheng X.H."/>
            <person name="Zhong F."/>
            <person name="Delcher A.L."/>
            <person name="Huson D.H."/>
            <person name="Kravitz S.A."/>
            <person name="Mouchard L."/>
            <person name="Reinert K."/>
            <person name="Remington K.A."/>
            <person name="Clark A.G."/>
            <person name="Waterman M.S."/>
            <person name="Eichler E.E."/>
            <person name="Adams M.D."/>
            <person name="Hunkapiller M.W."/>
            <person name="Myers E.W."/>
            <person name="Venter J.C."/>
        </authorList>
    </citation>
    <scope>NUCLEOTIDE SEQUENCE [LARGE SCALE GENOMIC DNA]</scope>
</reference>
<reference key="7">
    <citation type="journal article" date="2004" name="Genome Res.">
        <title>The status, quality, and expansion of the NIH full-length cDNA project: the Mammalian Gene Collection (MGC).</title>
        <authorList>
            <consortium name="The MGC Project Team"/>
        </authorList>
    </citation>
    <scope>NUCLEOTIDE SEQUENCE [LARGE SCALE MRNA]</scope>
    <source>
        <tissue>B-cell</tissue>
    </source>
</reference>
<reference key="8">
    <citation type="journal article" date="1999" name="Hum. Mol. Genet.">
        <title>Extensive gene order differences within regions of conserved synteny between the Fugu and human genomes: implications for chromosomal evolution and the cloning of disease genes.</title>
        <authorList>
            <person name="Gilley J."/>
            <person name="Fried M."/>
        </authorList>
    </citation>
    <scope>NUCLEOTIDE SEQUENCE [GENOMIC DNA] OF 213-302</scope>
</reference>
<organism>
    <name type="scientific">Homo sapiens</name>
    <name type="common">Human</name>
    <dbReference type="NCBI Taxonomy" id="9606"/>
    <lineage>
        <taxon>Eukaryota</taxon>
        <taxon>Metazoa</taxon>
        <taxon>Chordata</taxon>
        <taxon>Craniata</taxon>
        <taxon>Vertebrata</taxon>
        <taxon>Euteleostomi</taxon>
        <taxon>Mammalia</taxon>
        <taxon>Eutheria</taxon>
        <taxon>Euarchontoglires</taxon>
        <taxon>Primates</taxon>
        <taxon>Haplorrhini</taxon>
        <taxon>Catarrhini</taxon>
        <taxon>Hominidae</taxon>
        <taxon>Homo</taxon>
    </lineage>
</organism>
<sequence length="302" mass="34201">MKAPGRLVLIILCSVVFSAVYILLCCWAGLPLCLATCLDHHFPTGSRPTVPGPLHFSGYSSVPDGKPLVREPCRSCAVVSSSGQMLGSGLGAEIDSAECVFRMNQAPTVGFEADVGQRSTLRVVSHTSVPLLLRNYSHYFQKARDTLYMVWGQGRHMDRVLGGRTYRTLLQLTRMYPGLQVYTFTERMMAYCDQIFQDETGKNRRQSGSFLSTGWFTMILALELCEEIVVYGMVSDSYCREKSHPSVPYHYFEKGRLDECQMYLAHEQAPRSAHRFITEKAVFSRWAKKRPIVFAHPSWRTE</sequence>